<feature type="chain" id="PRO_0000414077" description="Putative WEB family protein At4g17210">
    <location>
        <begin position="1"/>
        <end position="527"/>
    </location>
</feature>
<feature type="region of interest" description="Disordered" evidence="2">
    <location>
        <begin position="1"/>
        <end position="28"/>
    </location>
</feature>
<feature type="region of interest" description="Disordered" evidence="2">
    <location>
        <begin position="46"/>
        <end position="70"/>
    </location>
</feature>
<feature type="coiled-coil region" evidence="1">
    <location>
        <begin position="95"/>
        <end position="159"/>
    </location>
</feature>
<feature type="coiled-coil region" evidence="1">
    <location>
        <begin position="202"/>
        <end position="389"/>
    </location>
</feature>
<feature type="coiled-coil region" evidence="1">
    <location>
        <begin position="436"/>
        <end position="513"/>
    </location>
</feature>
<feature type="compositionally biased region" description="Low complexity" evidence="2">
    <location>
        <begin position="55"/>
        <end position="68"/>
    </location>
</feature>
<reference key="1">
    <citation type="journal article" date="1998" name="Nature">
        <title>Analysis of 1.9 Mb of contiguous sequence from chromosome 4 of Arabidopsis thaliana.</title>
        <authorList>
            <person name="Bevan M."/>
            <person name="Bancroft I."/>
            <person name="Bent E."/>
            <person name="Love K."/>
            <person name="Goodman H.M."/>
            <person name="Dean C."/>
            <person name="Bergkamp R."/>
            <person name="Dirkse W."/>
            <person name="van Staveren M."/>
            <person name="Stiekema W."/>
            <person name="Drost L."/>
            <person name="Ridley P."/>
            <person name="Hudson S.-A."/>
            <person name="Patel K."/>
            <person name="Murphy G."/>
            <person name="Piffanelli P."/>
            <person name="Wedler H."/>
            <person name="Wedler E."/>
            <person name="Wambutt R."/>
            <person name="Weitzenegger T."/>
            <person name="Pohl T."/>
            <person name="Terryn N."/>
            <person name="Gielen J."/>
            <person name="Villarroel R."/>
            <person name="De Clercq R."/>
            <person name="van Montagu M."/>
            <person name="Lecharny A."/>
            <person name="Aubourg S."/>
            <person name="Gy I."/>
            <person name="Kreis M."/>
            <person name="Lao N."/>
            <person name="Kavanagh T."/>
            <person name="Hempel S."/>
            <person name="Kotter P."/>
            <person name="Entian K.-D."/>
            <person name="Rieger M."/>
            <person name="Schaefer M."/>
            <person name="Funk B."/>
            <person name="Mueller-Auer S."/>
            <person name="Silvey M."/>
            <person name="James R."/>
            <person name="Monfort A."/>
            <person name="Pons A."/>
            <person name="Puigdomenech P."/>
            <person name="Douka A."/>
            <person name="Voukelatou E."/>
            <person name="Milioni D."/>
            <person name="Hatzopoulos P."/>
            <person name="Piravandi E."/>
            <person name="Obermaier B."/>
            <person name="Hilbert H."/>
            <person name="Duesterhoeft A."/>
            <person name="Moores T."/>
            <person name="Jones J.D.G."/>
            <person name="Eneva T."/>
            <person name="Palme K."/>
            <person name="Benes V."/>
            <person name="Rechmann S."/>
            <person name="Ansorge W."/>
            <person name="Cooke R."/>
            <person name="Berger C."/>
            <person name="Delseny M."/>
            <person name="Voet M."/>
            <person name="Volckaert G."/>
            <person name="Mewes H.-W."/>
            <person name="Klosterman S."/>
            <person name="Schueller C."/>
            <person name="Chalwatzis N."/>
        </authorList>
    </citation>
    <scope>NUCLEOTIDE SEQUENCE [LARGE SCALE GENOMIC DNA]</scope>
    <source>
        <strain>cv. Columbia</strain>
    </source>
</reference>
<reference key="2">
    <citation type="journal article" date="1999" name="Nature">
        <title>Sequence and analysis of chromosome 4 of the plant Arabidopsis thaliana.</title>
        <authorList>
            <person name="Mayer K.F.X."/>
            <person name="Schueller C."/>
            <person name="Wambutt R."/>
            <person name="Murphy G."/>
            <person name="Volckaert G."/>
            <person name="Pohl T."/>
            <person name="Duesterhoeft A."/>
            <person name="Stiekema W."/>
            <person name="Entian K.-D."/>
            <person name="Terryn N."/>
            <person name="Harris B."/>
            <person name="Ansorge W."/>
            <person name="Brandt P."/>
            <person name="Grivell L.A."/>
            <person name="Rieger M."/>
            <person name="Weichselgartner M."/>
            <person name="de Simone V."/>
            <person name="Obermaier B."/>
            <person name="Mache R."/>
            <person name="Mueller M."/>
            <person name="Kreis M."/>
            <person name="Delseny M."/>
            <person name="Puigdomenech P."/>
            <person name="Watson M."/>
            <person name="Schmidtheini T."/>
            <person name="Reichert B."/>
            <person name="Portetelle D."/>
            <person name="Perez-Alonso M."/>
            <person name="Boutry M."/>
            <person name="Bancroft I."/>
            <person name="Vos P."/>
            <person name="Hoheisel J."/>
            <person name="Zimmermann W."/>
            <person name="Wedler H."/>
            <person name="Ridley P."/>
            <person name="Langham S.-A."/>
            <person name="McCullagh B."/>
            <person name="Bilham L."/>
            <person name="Robben J."/>
            <person name="van der Schueren J."/>
            <person name="Grymonprez B."/>
            <person name="Chuang Y.-J."/>
            <person name="Vandenbussche F."/>
            <person name="Braeken M."/>
            <person name="Weltjens I."/>
            <person name="Voet M."/>
            <person name="Bastiaens I."/>
            <person name="Aert R."/>
            <person name="Defoor E."/>
            <person name="Weitzenegger T."/>
            <person name="Bothe G."/>
            <person name="Ramsperger U."/>
            <person name="Hilbert H."/>
            <person name="Braun M."/>
            <person name="Holzer E."/>
            <person name="Brandt A."/>
            <person name="Peters S."/>
            <person name="van Staveren M."/>
            <person name="Dirkse W."/>
            <person name="Mooijman P."/>
            <person name="Klein Lankhorst R."/>
            <person name="Rose M."/>
            <person name="Hauf J."/>
            <person name="Koetter P."/>
            <person name="Berneiser S."/>
            <person name="Hempel S."/>
            <person name="Feldpausch M."/>
            <person name="Lamberth S."/>
            <person name="Van den Daele H."/>
            <person name="De Keyser A."/>
            <person name="Buysshaert C."/>
            <person name="Gielen J."/>
            <person name="Villarroel R."/>
            <person name="De Clercq R."/>
            <person name="van Montagu M."/>
            <person name="Rogers J."/>
            <person name="Cronin A."/>
            <person name="Quail M.A."/>
            <person name="Bray-Allen S."/>
            <person name="Clark L."/>
            <person name="Doggett J."/>
            <person name="Hall S."/>
            <person name="Kay M."/>
            <person name="Lennard N."/>
            <person name="McLay K."/>
            <person name="Mayes R."/>
            <person name="Pettett A."/>
            <person name="Rajandream M.A."/>
            <person name="Lyne M."/>
            <person name="Benes V."/>
            <person name="Rechmann S."/>
            <person name="Borkova D."/>
            <person name="Bloecker H."/>
            <person name="Scharfe M."/>
            <person name="Grimm M."/>
            <person name="Loehnert T.-H."/>
            <person name="Dose S."/>
            <person name="de Haan M."/>
            <person name="Maarse A.C."/>
            <person name="Schaefer M."/>
            <person name="Mueller-Auer S."/>
            <person name="Gabel C."/>
            <person name="Fuchs M."/>
            <person name="Fartmann B."/>
            <person name="Granderath K."/>
            <person name="Dauner D."/>
            <person name="Herzl A."/>
            <person name="Neumann S."/>
            <person name="Argiriou A."/>
            <person name="Vitale D."/>
            <person name="Liguori R."/>
            <person name="Piravandi E."/>
            <person name="Massenet O."/>
            <person name="Quigley F."/>
            <person name="Clabauld G."/>
            <person name="Muendlein A."/>
            <person name="Felber R."/>
            <person name="Schnabl S."/>
            <person name="Hiller R."/>
            <person name="Schmidt W."/>
            <person name="Lecharny A."/>
            <person name="Aubourg S."/>
            <person name="Chefdor F."/>
            <person name="Cooke R."/>
            <person name="Berger C."/>
            <person name="Monfort A."/>
            <person name="Casacuberta E."/>
            <person name="Gibbons T."/>
            <person name="Weber N."/>
            <person name="Vandenbol M."/>
            <person name="Bargues M."/>
            <person name="Terol J."/>
            <person name="Torres A."/>
            <person name="Perez-Perez A."/>
            <person name="Purnelle B."/>
            <person name="Bent E."/>
            <person name="Johnson S."/>
            <person name="Tacon D."/>
            <person name="Jesse T."/>
            <person name="Heijnen L."/>
            <person name="Schwarz S."/>
            <person name="Scholler P."/>
            <person name="Heber S."/>
            <person name="Francs P."/>
            <person name="Bielke C."/>
            <person name="Frishman D."/>
            <person name="Haase D."/>
            <person name="Lemcke K."/>
            <person name="Mewes H.-W."/>
            <person name="Stocker S."/>
            <person name="Zaccaria P."/>
            <person name="Bevan M."/>
            <person name="Wilson R.K."/>
            <person name="de la Bastide M."/>
            <person name="Habermann K."/>
            <person name="Parnell L."/>
            <person name="Dedhia N."/>
            <person name="Gnoj L."/>
            <person name="Schutz K."/>
            <person name="Huang E."/>
            <person name="Spiegel L."/>
            <person name="Sekhon M."/>
            <person name="Murray J."/>
            <person name="Sheet P."/>
            <person name="Cordes M."/>
            <person name="Abu-Threideh J."/>
            <person name="Stoneking T."/>
            <person name="Kalicki J."/>
            <person name="Graves T."/>
            <person name="Harmon G."/>
            <person name="Edwards J."/>
            <person name="Latreille P."/>
            <person name="Courtney L."/>
            <person name="Cloud J."/>
            <person name="Abbott A."/>
            <person name="Scott K."/>
            <person name="Johnson D."/>
            <person name="Minx P."/>
            <person name="Bentley D."/>
            <person name="Fulton B."/>
            <person name="Miller N."/>
            <person name="Greco T."/>
            <person name="Kemp K."/>
            <person name="Kramer J."/>
            <person name="Fulton L."/>
            <person name="Mardis E."/>
            <person name="Dante M."/>
            <person name="Pepin K."/>
            <person name="Hillier L.W."/>
            <person name="Nelson J."/>
            <person name="Spieth J."/>
            <person name="Ryan E."/>
            <person name="Andrews S."/>
            <person name="Geisel C."/>
            <person name="Layman D."/>
            <person name="Du H."/>
            <person name="Ali J."/>
            <person name="Berghoff A."/>
            <person name="Jones K."/>
            <person name="Drone K."/>
            <person name="Cotton M."/>
            <person name="Joshu C."/>
            <person name="Antonoiu B."/>
            <person name="Zidanic M."/>
            <person name="Strong C."/>
            <person name="Sun H."/>
            <person name="Lamar B."/>
            <person name="Yordan C."/>
            <person name="Ma P."/>
            <person name="Zhong J."/>
            <person name="Preston R."/>
            <person name="Vil D."/>
            <person name="Shekher M."/>
            <person name="Matero A."/>
            <person name="Shah R."/>
            <person name="Swaby I.K."/>
            <person name="O'Shaughnessy A."/>
            <person name="Rodriguez M."/>
            <person name="Hoffman J."/>
            <person name="Till S."/>
            <person name="Granat S."/>
            <person name="Shohdy N."/>
            <person name="Hasegawa A."/>
            <person name="Hameed A."/>
            <person name="Lodhi M."/>
            <person name="Johnson A."/>
            <person name="Chen E."/>
            <person name="Marra M.A."/>
            <person name="Martienssen R."/>
            <person name="McCombie W.R."/>
        </authorList>
    </citation>
    <scope>NUCLEOTIDE SEQUENCE [LARGE SCALE GENOMIC DNA]</scope>
    <source>
        <strain>cv. Columbia</strain>
    </source>
</reference>
<reference key="3">
    <citation type="journal article" date="2017" name="Plant J.">
        <title>Araport11: a complete reannotation of the Arabidopsis thaliana reference genome.</title>
        <authorList>
            <person name="Cheng C.Y."/>
            <person name="Krishnakumar V."/>
            <person name="Chan A.P."/>
            <person name="Thibaud-Nissen F."/>
            <person name="Schobel S."/>
            <person name="Town C.D."/>
        </authorList>
    </citation>
    <scope>GENOME REANNOTATION</scope>
    <source>
        <strain>cv. Columbia</strain>
    </source>
</reference>
<protein>
    <recommendedName>
        <fullName>Putative WEB family protein At4g17210</fullName>
    </recommendedName>
</protein>
<name>Y4721_ARATH</name>
<comment type="similarity">
    <text evidence="3">Belongs to the WEB family.</text>
</comment>
<keyword id="KW-0175">Coiled coil</keyword>
<keyword id="KW-1185">Reference proteome</keyword>
<proteinExistence type="inferred from homology"/>
<accession>O23564</accession>
<dbReference type="EMBL" id="Z97343">
    <property type="protein sequence ID" value="CAB10502.1"/>
    <property type="molecule type" value="Genomic_DNA"/>
</dbReference>
<dbReference type="EMBL" id="AL161546">
    <property type="protein sequence ID" value="CAB78724.1"/>
    <property type="molecule type" value="Genomic_DNA"/>
</dbReference>
<dbReference type="EMBL" id="CP002687">
    <property type="protein sequence ID" value="AEE83862.1"/>
    <property type="molecule type" value="Genomic_DNA"/>
</dbReference>
<dbReference type="PIR" id="A71441">
    <property type="entry name" value="A71441"/>
</dbReference>
<dbReference type="RefSeq" id="NP_193454.1">
    <property type="nucleotide sequence ID" value="NM_117825.2"/>
</dbReference>
<dbReference type="SMR" id="O23564"/>
<dbReference type="FunCoup" id="O23564">
    <property type="interactions" value="128"/>
</dbReference>
<dbReference type="STRING" id="3702.O23564"/>
<dbReference type="PaxDb" id="3702-AT4G17210.1"/>
<dbReference type="ProteomicsDB" id="242827"/>
<dbReference type="EnsemblPlants" id="AT4G17210.1">
    <property type="protein sequence ID" value="AT4G17210.1"/>
    <property type="gene ID" value="AT4G17210"/>
</dbReference>
<dbReference type="GeneID" id="827432"/>
<dbReference type="Gramene" id="AT4G17210.1">
    <property type="protein sequence ID" value="AT4G17210.1"/>
    <property type="gene ID" value="AT4G17210"/>
</dbReference>
<dbReference type="KEGG" id="ath:AT4G17210"/>
<dbReference type="Araport" id="AT4G17210"/>
<dbReference type="TAIR" id="AT4G17210"/>
<dbReference type="eggNOG" id="ENOG502QV0R">
    <property type="taxonomic scope" value="Eukaryota"/>
</dbReference>
<dbReference type="HOGENOM" id="CLU_027385_0_0_1"/>
<dbReference type="InParanoid" id="O23564"/>
<dbReference type="OMA" id="CAISTKH"/>
<dbReference type="PhylomeDB" id="O23564"/>
<dbReference type="PRO" id="PR:O23564"/>
<dbReference type="Proteomes" id="UP000006548">
    <property type="component" value="Chromosome 4"/>
</dbReference>
<dbReference type="ExpressionAtlas" id="O23564">
    <property type="expression patterns" value="baseline and differential"/>
</dbReference>
<dbReference type="InterPro" id="IPR008545">
    <property type="entry name" value="Web"/>
</dbReference>
<dbReference type="PANTHER" id="PTHR32054">
    <property type="entry name" value="HEAVY CHAIN, PUTATIVE, EXPRESSED-RELATED-RELATED"/>
    <property type="match status" value="1"/>
</dbReference>
<dbReference type="PANTHER" id="PTHR32054:SF66">
    <property type="entry name" value="WEB FAMILY PROTEIN"/>
    <property type="match status" value="1"/>
</dbReference>
<dbReference type="Pfam" id="PF05701">
    <property type="entry name" value="WEMBL"/>
    <property type="match status" value="1"/>
</dbReference>
<evidence type="ECO:0000255" key="1"/>
<evidence type="ECO:0000256" key="2">
    <source>
        <dbReference type="SAM" id="MobiDB-lite"/>
    </source>
</evidence>
<evidence type="ECO:0000305" key="3"/>
<sequence length="527" mass="60517">MAKIRTDAPVMPPETPPRSSEVGEIDTRAPFQSVRDALSLFRQVSFSKKQPPRLSSSSSSQSQDTTTDVSDKEMQLLLAEQEMDRVKICLDGSVAAKAQALSDLDSAQRKAADLRVKLESIKHSRKCAISTKHTMNQRLEQLQSENQETESTREDYILITAELFMAKYELAELKQQFNLSVEERLAELQRAEEAECASMVNSNKIKDMSHDIAEMRDAAERLNSDAARKKEEEEQIKEESIALRETYVCKKLEAKQRLEDLKRDCDPELKKDIEELMEISTENERLQEEIKLSGELKEAKSAMQEIYDEESSYKSLVGSLTVELDGVQRENRELKGKEKERQEAEEGEWVEASRKVDEIMREAEKTRKEAEEMRMNVDELRREAAAKHMVMGEAVKQLEIVGRAVEKAKTAEKRAVEDMKVLTEKKESLTHDEPDKKIRISLKEYEELRGKHEESERMVQFKAKTVAAQLEEINESRIEGERKLEEKIKEMEELKAAIDGALRKAEIAEEAHSIVDAELRKWKPQDL</sequence>
<gene>
    <name type="ordered locus">At4g17210</name>
    <name type="ORF">dl4640c</name>
    <name type="ORF">FCAALL.382</name>
</gene>
<organism>
    <name type="scientific">Arabidopsis thaliana</name>
    <name type="common">Mouse-ear cress</name>
    <dbReference type="NCBI Taxonomy" id="3702"/>
    <lineage>
        <taxon>Eukaryota</taxon>
        <taxon>Viridiplantae</taxon>
        <taxon>Streptophyta</taxon>
        <taxon>Embryophyta</taxon>
        <taxon>Tracheophyta</taxon>
        <taxon>Spermatophyta</taxon>
        <taxon>Magnoliopsida</taxon>
        <taxon>eudicotyledons</taxon>
        <taxon>Gunneridae</taxon>
        <taxon>Pentapetalae</taxon>
        <taxon>rosids</taxon>
        <taxon>malvids</taxon>
        <taxon>Brassicales</taxon>
        <taxon>Brassicaceae</taxon>
        <taxon>Camelineae</taxon>
        <taxon>Arabidopsis</taxon>
    </lineage>
</organism>